<feature type="chain" id="PRO_0000135021" description="Rubredoxin">
    <location>
        <begin position="1"/>
        <end position="54"/>
    </location>
</feature>
<feature type="domain" description="Rubredoxin-like" evidence="2">
    <location>
        <begin position="1"/>
        <end position="54"/>
    </location>
</feature>
<feature type="binding site" evidence="2">
    <location>
        <position position="6"/>
    </location>
    <ligand>
        <name>Fe cation</name>
        <dbReference type="ChEBI" id="CHEBI:24875"/>
    </ligand>
</feature>
<feature type="binding site" evidence="2">
    <location>
        <position position="9"/>
    </location>
    <ligand>
        <name>Fe cation</name>
        <dbReference type="ChEBI" id="CHEBI:24875"/>
    </ligand>
</feature>
<feature type="binding site" evidence="2">
    <location>
        <position position="39"/>
    </location>
    <ligand>
        <name>Fe cation</name>
        <dbReference type="ChEBI" id="CHEBI:24875"/>
    </ligand>
</feature>
<feature type="binding site" evidence="2">
    <location>
        <position position="42"/>
    </location>
    <ligand>
        <name>Fe cation</name>
        <dbReference type="ChEBI" id="CHEBI:24875"/>
    </ligand>
</feature>
<keyword id="KW-0963">Cytoplasm</keyword>
<keyword id="KW-0249">Electron transport</keyword>
<keyword id="KW-0408">Iron</keyword>
<keyword id="KW-0479">Metal-binding</keyword>
<keyword id="KW-0813">Transport</keyword>
<protein>
    <recommendedName>
        <fullName>Rubredoxin</fullName>
        <shortName>Rdxs</shortName>
    </recommendedName>
</protein>
<organism>
    <name type="scientific">Acinetobacter baylyi (strain ATCC 33305 / BD413 / ADP1)</name>
    <dbReference type="NCBI Taxonomy" id="62977"/>
    <lineage>
        <taxon>Bacteria</taxon>
        <taxon>Pseudomonadati</taxon>
        <taxon>Pseudomonadota</taxon>
        <taxon>Gammaproteobacteria</taxon>
        <taxon>Moraxellales</taxon>
        <taxon>Moraxellaceae</taxon>
        <taxon>Acinetobacter</taxon>
    </lineage>
</organism>
<gene>
    <name type="primary">rubA</name>
    <name type="ordered locus">ACIAD1066</name>
</gene>
<evidence type="ECO:0000250" key="1"/>
<evidence type="ECO:0000255" key="2">
    <source>
        <dbReference type="PROSITE-ProRule" id="PRU00241"/>
    </source>
</evidence>
<evidence type="ECO:0000269" key="3">
    <source>
    </source>
</evidence>
<evidence type="ECO:0000305" key="4"/>
<dbReference type="EMBL" id="Z46863">
    <property type="protein sequence ID" value="CAA86925.1"/>
    <property type="molecule type" value="Genomic_DNA"/>
</dbReference>
<dbReference type="EMBL" id="CR543861">
    <property type="protein sequence ID" value="CAG67954.1"/>
    <property type="molecule type" value="Genomic_DNA"/>
</dbReference>
<dbReference type="PIR" id="I39520">
    <property type="entry name" value="I39520"/>
</dbReference>
<dbReference type="RefSeq" id="WP_004921639.1">
    <property type="nucleotide sequence ID" value="NC_005966.1"/>
</dbReference>
<dbReference type="SMR" id="P42453"/>
<dbReference type="STRING" id="202950.GCA_001485005_01299"/>
<dbReference type="GeneID" id="45233508"/>
<dbReference type="KEGG" id="aci:ACIAD1066"/>
<dbReference type="eggNOG" id="COG1773">
    <property type="taxonomic scope" value="Bacteria"/>
</dbReference>
<dbReference type="HOGENOM" id="CLU_128747_1_1_6"/>
<dbReference type="OrthoDB" id="9800607at2"/>
<dbReference type="BioCyc" id="ASP62977:ACIAD_RS04915-MONOMER"/>
<dbReference type="UniPathway" id="UPA00191"/>
<dbReference type="Proteomes" id="UP000000430">
    <property type="component" value="Chromosome"/>
</dbReference>
<dbReference type="GO" id="GO:0005737">
    <property type="term" value="C:cytoplasm"/>
    <property type="evidence" value="ECO:0007669"/>
    <property type="project" value="UniProtKB-SubCell"/>
</dbReference>
<dbReference type="GO" id="GO:0009055">
    <property type="term" value="F:electron transfer activity"/>
    <property type="evidence" value="ECO:0007669"/>
    <property type="project" value="InterPro"/>
</dbReference>
<dbReference type="GO" id="GO:0005506">
    <property type="term" value="F:iron ion binding"/>
    <property type="evidence" value="ECO:0007669"/>
    <property type="project" value="InterPro"/>
</dbReference>
<dbReference type="GO" id="GO:0043448">
    <property type="term" value="P:alkane catabolic process"/>
    <property type="evidence" value="ECO:0000315"/>
    <property type="project" value="UniProtKB"/>
</dbReference>
<dbReference type="CDD" id="cd00730">
    <property type="entry name" value="rubredoxin"/>
    <property type="match status" value="1"/>
</dbReference>
<dbReference type="FunFam" id="2.20.28.10:FF:000001">
    <property type="entry name" value="Rubredoxin"/>
    <property type="match status" value="1"/>
</dbReference>
<dbReference type="Gene3D" id="2.20.28.10">
    <property type="match status" value="1"/>
</dbReference>
<dbReference type="InterPro" id="IPR024922">
    <property type="entry name" value="Rubredoxin"/>
</dbReference>
<dbReference type="InterPro" id="IPR024934">
    <property type="entry name" value="Rubredoxin-like_dom"/>
</dbReference>
<dbReference type="InterPro" id="IPR024935">
    <property type="entry name" value="Rubredoxin_dom"/>
</dbReference>
<dbReference type="InterPro" id="IPR050526">
    <property type="entry name" value="Rubredoxin_ET"/>
</dbReference>
<dbReference type="InterPro" id="IPR018527">
    <property type="entry name" value="Rubredoxin_Fe_BS"/>
</dbReference>
<dbReference type="PANTHER" id="PTHR47627">
    <property type="entry name" value="RUBREDOXIN"/>
    <property type="match status" value="1"/>
</dbReference>
<dbReference type="PANTHER" id="PTHR47627:SF1">
    <property type="entry name" value="RUBREDOXIN-1-RELATED"/>
    <property type="match status" value="1"/>
</dbReference>
<dbReference type="Pfam" id="PF00301">
    <property type="entry name" value="Rubredoxin"/>
    <property type="match status" value="1"/>
</dbReference>
<dbReference type="PIRSF" id="PIRSF000071">
    <property type="entry name" value="Rubredoxin"/>
    <property type="match status" value="1"/>
</dbReference>
<dbReference type="PRINTS" id="PR00163">
    <property type="entry name" value="RUBREDOXIN"/>
</dbReference>
<dbReference type="SUPFAM" id="SSF57802">
    <property type="entry name" value="Rubredoxin-like"/>
    <property type="match status" value="1"/>
</dbReference>
<dbReference type="PROSITE" id="PS00202">
    <property type="entry name" value="RUBREDOXIN"/>
    <property type="match status" value="1"/>
</dbReference>
<dbReference type="PROSITE" id="PS50903">
    <property type="entry name" value="RUBREDOXIN_LIKE"/>
    <property type="match status" value="1"/>
</dbReference>
<proteinExistence type="evidence at protein level"/>
<name>RUBR_ACIAD</name>
<accession>P42453</accession>
<reference key="1">
    <citation type="journal article" date="1995" name="Microbiology">
        <title>Two genes encoding proteins with similarities to rubredoxin and rubredoxin reductase are required for conversion of dodecane to lauric acid in Acinetobacter calcoaceticus ADP1.</title>
        <authorList>
            <person name="Geissdoerfer W."/>
            <person name="Frosch C.S."/>
            <person name="Haspel G."/>
            <person name="Ehrt S."/>
            <person name="Hillen W."/>
        </authorList>
    </citation>
    <scope>NUCLEOTIDE SEQUENCE [GENOMIC DNA]</scope>
</reference>
<reference key="2">
    <citation type="journal article" date="2004" name="Nucleic Acids Res.">
        <title>Unique features revealed by the genome sequence of Acinetobacter sp. ADP1, a versatile and naturally transformation competent bacterium.</title>
        <authorList>
            <person name="Barbe V."/>
            <person name="Vallenet D."/>
            <person name="Fonknechten N."/>
            <person name="Kreimeyer A."/>
            <person name="Oztas S."/>
            <person name="Labarre L."/>
            <person name="Cruveiller S."/>
            <person name="Robert C."/>
            <person name="Duprat S."/>
            <person name="Wincker P."/>
            <person name="Ornston L.N."/>
            <person name="Weissenbach J."/>
            <person name="Marliere P."/>
            <person name="Cohen G.N."/>
            <person name="Medigue C."/>
        </authorList>
    </citation>
    <scope>NUCLEOTIDE SEQUENCE [LARGE SCALE GENOMIC DNA]</scope>
    <source>
        <strain>ATCC 33305 / BD413 / ADP1</strain>
    </source>
</reference>
<reference key="3">
    <citation type="journal article" date="1999" name="J. Bacteriol.">
        <title>The genes rubA and rubB for alkane degradation in Acinetobacter sp. strain ADP1 are in an operon with estB, encoding an esterase, and oxyR.</title>
        <authorList>
            <person name="Geissdorfer W."/>
            <person name="Kok R.G."/>
            <person name="Ratajczak A."/>
            <person name="Hellingwerf K.J."/>
            <person name="Hillen W."/>
        </authorList>
    </citation>
    <scope>FUNCTION IN ALKANE DEGRADATION</scope>
    <scope>INDUCTION</scope>
</reference>
<sequence length="54" mass="6199">MKKYQCIVCGWIYDEAEGWPQDGIAPGTKWEDIPDDWTCPDCGVSKVDFEMIEV</sequence>
<comment type="function">
    <text evidence="3">Involved in the hydrocarbon hydroxylating system, which transfers electrons from NADH to rubredoxin reductase and then through rubredoxin to alkane 1 monooxygenase.</text>
</comment>
<comment type="cofactor">
    <cofactor evidence="1">
        <name>Fe(3+)</name>
        <dbReference type="ChEBI" id="CHEBI:29034"/>
    </cofactor>
    <text evidence="1">Binds 1 Fe(3+) ion per subunit.</text>
</comment>
<comment type="pathway">
    <text>Hydrocarbon metabolism; alkane degradation.</text>
</comment>
<comment type="subcellular location">
    <subcellularLocation>
        <location evidence="1">Cytoplasm</location>
    </subcellularLocation>
</comment>
<comment type="induction">
    <text evidence="3">Constitutively expressed.</text>
</comment>
<comment type="similarity">
    <text evidence="4">Belongs to the rubredoxin family.</text>
</comment>